<gene>
    <name type="primary">aktip-b</name>
    <name type="synonym">aktip</name>
    <name type="synonym">fts-b</name>
</gene>
<comment type="function">
    <text evidence="1">May function to promote vesicle trafficking and/or fusion. May also regulate apoptosis (By similarity).</text>
</comment>
<comment type="subcellular location">
    <subcellularLocation>
        <location evidence="1">Cytoplasm</location>
    </subcellularLocation>
    <subcellularLocation>
        <location evidence="1">Cell membrane</location>
        <topology evidence="1">Peripheral membrane protein</topology>
    </subcellularLocation>
</comment>
<comment type="similarity">
    <text evidence="2">Belongs to the ubiquitin-conjugating enzyme family. FTS subfamily.</text>
</comment>
<comment type="caution">
    <text evidence="4">Lacks the conserved Cys residue necessary for ubiquitin-conjugating enzyme E2 activity.</text>
</comment>
<organism>
    <name type="scientific">Xenopus laevis</name>
    <name type="common">African clawed frog</name>
    <dbReference type="NCBI Taxonomy" id="8355"/>
    <lineage>
        <taxon>Eukaryota</taxon>
        <taxon>Metazoa</taxon>
        <taxon>Chordata</taxon>
        <taxon>Craniata</taxon>
        <taxon>Vertebrata</taxon>
        <taxon>Euteleostomi</taxon>
        <taxon>Amphibia</taxon>
        <taxon>Batrachia</taxon>
        <taxon>Anura</taxon>
        <taxon>Pipoidea</taxon>
        <taxon>Pipidae</taxon>
        <taxon>Xenopodinae</taxon>
        <taxon>Xenopus</taxon>
        <taxon>Xenopus</taxon>
    </lineage>
</organism>
<evidence type="ECO:0000250" key="1"/>
<evidence type="ECO:0000255" key="2">
    <source>
        <dbReference type="PROSITE-ProRule" id="PRU00388"/>
    </source>
</evidence>
<evidence type="ECO:0000256" key="3">
    <source>
        <dbReference type="SAM" id="MobiDB-lite"/>
    </source>
</evidence>
<evidence type="ECO:0000305" key="4"/>
<sequence>MNPFWNMPSASVRKRSDNDEKIATADQKISPARSSSAKKQLPSIPKNAVPITKPISPPLSVQSTNGTHASYGPFYLEYSLLAEFTLVVKQKLPGVYVQPSYSSALMWFGVIFIRHGLYQDGVFKFTVYIPDNYPDGECPRLVFDIPVFHPLVDPISGELDVKRAFTKWRRNHNHIWQVLMYARRIFYKIDTTSPLNPEAAVLYEKDVQLFKSKVVDSVKLCNSHLFDKPKIEDPYAIIFSPWNPVLHDDARERMLAQKKSEEQSRGLHVSGLSWVKPGSVLPFSKEENSLQT</sequence>
<proteinExistence type="evidence at transcript level"/>
<dbReference type="EMBL" id="BC084320">
    <property type="protein sequence ID" value="AAH84320.1"/>
    <property type="molecule type" value="mRNA"/>
</dbReference>
<dbReference type="RefSeq" id="NP_001088292.1">
    <property type="nucleotide sequence ID" value="NM_001094823.1"/>
</dbReference>
<dbReference type="SMR" id="Q5XGV8"/>
<dbReference type="DNASU" id="495128"/>
<dbReference type="GeneID" id="495128"/>
<dbReference type="KEGG" id="xla:495128"/>
<dbReference type="AGR" id="Xenbase:XB-GENE-5735853"/>
<dbReference type="CTD" id="495128"/>
<dbReference type="Xenbase" id="XB-GENE-5735853">
    <property type="gene designation" value="aktip.S"/>
</dbReference>
<dbReference type="OMA" id="LEXSLLA"/>
<dbReference type="OrthoDB" id="5596422at2759"/>
<dbReference type="Proteomes" id="UP000186698">
    <property type="component" value="Chromosome 4S"/>
</dbReference>
<dbReference type="Bgee" id="495128">
    <property type="expression patterns" value="Expressed in blastula and 19 other cell types or tissues"/>
</dbReference>
<dbReference type="GO" id="GO:0070695">
    <property type="term" value="C:FHF complex"/>
    <property type="evidence" value="ECO:0000250"/>
    <property type="project" value="UniProtKB"/>
</dbReference>
<dbReference type="GO" id="GO:0005886">
    <property type="term" value="C:plasma membrane"/>
    <property type="evidence" value="ECO:0007669"/>
    <property type="project" value="UniProtKB-SubCell"/>
</dbReference>
<dbReference type="GO" id="GO:0006915">
    <property type="term" value="P:apoptotic process"/>
    <property type="evidence" value="ECO:0007669"/>
    <property type="project" value="UniProtKB-KW"/>
</dbReference>
<dbReference type="GO" id="GO:0045022">
    <property type="term" value="P:early endosome to late endosome transport"/>
    <property type="evidence" value="ECO:0000250"/>
    <property type="project" value="UniProtKB"/>
</dbReference>
<dbReference type="GO" id="GO:0007032">
    <property type="term" value="P:endosome organization"/>
    <property type="evidence" value="ECO:0000250"/>
    <property type="project" value="UniProtKB"/>
</dbReference>
<dbReference type="GO" id="GO:0008333">
    <property type="term" value="P:endosome to lysosome transport"/>
    <property type="evidence" value="ECO:0000250"/>
    <property type="project" value="UniProtKB"/>
</dbReference>
<dbReference type="GO" id="GO:0007040">
    <property type="term" value="P:lysosome organization"/>
    <property type="evidence" value="ECO:0000250"/>
    <property type="project" value="UniProtKB"/>
</dbReference>
<dbReference type="GO" id="GO:0015031">
    <property type="term" value="P:protein transport"/>
    <property type="evidence" value="ECO:0007669"/>
    <property type="project" value="UniProtKB-KW"/>
</dbReference>
<dbReference type="CDD" id="cd23814">
    <property type="entry name" value="UEV_AKTIP"/>
    <property type="match status" value="1"/>
</dbReference>
<dbReference type="FunFam" id="3.10.110.10:FF:000030">
    <property type="entry name" value="AKT-interacting protein-like isoform X2"/>
    <property type="match status" value="1"/>
</dbReference>
<dbReference type="Gene3D" id="3.10.110.10">
    <property type="entry name" value="Ubiquitin Conjugating Enzyme"/>
    <property type="match status" value="1"/>
</dbReference>
<dbReference type="InterPro" id="IPR050113">
    <property type="entry name" value="Ub_conjugating_enzyme"/>
</dbReference>
<dbReference type="InterPro" id="IPR000608">
    <property type="entry name" value="UBQ-conjugat_E2_core"/>
</dbReference>
<dbReference type="InterPro" id="IPR016135">
    <property type="entry name" value="UBQ-conjugating_enzyme/RWD"/>
</dbReference>
<dbReference type="PANTHER" id="PTHR24067">
    <property type="entry name" value="UBIQUITIN-CONJUGATING ENZYME E2"/>
    <property type="match status" value="1"/>
</dbReference>
<dbReference type="Pfam" id="PF00179">
    <property type="entry name" value="UQ_con"/>
    <property type="match status" value="1"/>
</dbReference>
<dbReference type="SMART" id="SM00212">
    <property type="entry name" value="UBCc"/>
    <property type="match status" value="1"/>
</dbReference>
<dbReference type="SUPFAM" id="SSF54495">
    <property type="entry name" value="UBC-like"/>
    <property type="match status" value="1"/>
</dbReference>
<dbReference type="PROSITE" id="PS50127">
    <property type="entry name" value="UBC_2"/>
    <property type="match status" value="1"/>
</dbReference>
<protein>
    <recommendedName>
        <fullName>AKT-interacting protein homolog B</fullName>
    </recommendedName>
</protein>
<keyword id="KW-0053">Apoptosis</keyword>
<keyword id="KW-1003">Cell membrane</keyword>
<keyword id="KW-0963">Cytoplasm</keyword>
<keyword id="KW-0472">Membrane</keyword>
<keyword id="KW-0653">Protein transport</keyword>
<keyword id="KW-1185">Reference proteome</keyword>
<keyword id="KW-0813">Transport</keyword>
<feature type="chain" id="PRO_0000379023" description="AKT-interacting protein homolog B">
    <location>
        <begin position="1"/>
        <end position="292"/>
    </location>
</feature>
<feature type="domain" description="UBC core" evidence="2">
    <location>
        <begin position="75"/>
        <end position="223"/>
    </location>
</feature>
<feature type="region of interest" description="Disordered" evidence="3">
    <location>
        <begin position="1"/>
        <end position="44"/>
    </location>
</feature>
<feature type="compositionally biased region" description="Basic and acidic residues" evidence="3">
    <location>
        <begin position="14"/>
        <end position="23"/>
    </location>
</feature>
<reference key="1">
    <citation type="submission" date="2004-10" db="EMBL/GenBank/DDBJ databases">
        <authorList>
            <consortium name="NIH - Xenopus Gene Collection (XGC) project"/>
        </authorList>
    </citation>
    <scope>NUCLEOTIDE SEQUENCE [LARGE SCALE MRNA]</scope>
    <source>
        <tissue>Oocyte</tissue>
    </source>
</reference>
<accession>Q5XGV8</accession>
<name>AKTPB_XENLA</name>